<comment type="function">
    <text evidence="1">Basement membrane-associated chondroitin sulfate proteoglycan (CSPG). Has prolyl 3-hydroxylase activity catalyzing the post-translational formation of 3-hydroxyproline in -Xaa-Pro-Gly- sequences in collagens, especially types IV and V. May be involved in the secretory pathway of cells. Has growth suppressive activity in fibroblasts (By similarity).</text>
</comment>
<comment type="catalytic activity">
    <reaction>
        <text>L-prolyl-[collagen] + 2-oxoglutarate + O2 = trans-3-hydroxy-L-prolyl-[collagen] + succinate + CO2</text>
        <dbReference type="Rhea" id="RHEA:22872"/>
        <dbReference type="Rhea" id="RHEA-COMP:11676"/>
        <dbReference type="Rhea" id="RHEA-COMP:11678"/>
        <dbReference type="ChEBI" id="CHEBI:15379"/>
        <dbReference type="ChEBI" id="CHEBI:16526"/>
        <dbReference type="ChEBI" id="CHEBI:16810"/>
        <dbReference type="ChEBI" id="CHEBI:30031"/>
        <dbReference type="ChEBI" id="CHEBI:50342"/>
        <dbReference type="ChEBI" id="CHEBI:85428"/>
        <dbReference type="EC" id="1.14.11.7"/>
    </reaction>
</comment>
<comment type="cofactor">
    <cofactor evidence="1">
        <name>Fe cation</name>
        <dbReference type="ChEBI" id="CHEBI:24875"/>
    </cofactor>
</comment>
<comment type="cofactor">
    <cofactor evidence="1">
        <name>L-ascorbate</name>
        <dbReference type="ChEBI" id="CHEBI:38290"/>
    </cofactor>
</comment>
<comment type="subcellular location">
    <subcellularLocation>
        <location evidence="5">Endoplasmic reticulum</location>
    </subcellularLocation>
    <subcellularLocation>
        <location evidence="2">Secreted</location>
        <location evidence="2">Extracellular space</location>
        <location evidence="2">Extracellular matrix</location>
    </subcellularLocation>
    <text evidence="2">Secreted into the extracellular matrix as a chondroitin sulfate proteoglycan (CSPG).</text>
</comment>
<comment type="alternative products">
    <event type="alternative splicing"/>
    <isoform>
        <id>Q3V1T4-1</id>
        <name>1</name>
        <name>GROS1-L</name>
        <sequence type="displayed"/>
    </isoform>
    <isoform>
        <id>Q3V1T4-2</id>
        <name>2</name>
        <name>GROS1-S</name>
        <sequence type="described" ref="VSP_019350 VSP_019351"/>
    </isoform>
    <isoform>
        <id>Q3V1T4-3</id>
        <name>3</name>
        <sequence type="described" ref="VSP_019349"/>
    </isoform>
</comment>
<comment type="PTM">
    <text evidence="2">O-glycosylated; chondroitin sulfate.</text>
</comment>
<comment type="similarity">
    <text evidence="9">Belongs to the leprecan family.</text>
</comment>
<comment type="sequence caution" evidence="9">
    <conflict type="frameshift">
        <sequence resource="EMBL-CDS" id="BAB27041"/>
    </conflict>
</comment>
<comment type="sequence caution" evidence="9">
    <conflict type="miscellaneous discrepancy">
        <sequence resource="EMBL-CDS" id="BAE21065"/>
    </conflict>
    <text>Intron retention.</text>
</comment>
<gene>
    <name evidence="10" type="primary">P3h1</name>
    <name evidence="7" type="synonym">Gros1</name>
    <name evidence="2" type="synonym">Lepre1</name>
</gene>
<organism>
    <name type="scientific">Mus musculus</name>
    <name type="common">Mouse</name>
    <dbReference type="NCBI Taxonomy" id="10090"/>
    <lineage>
        <taxon>Eukaryota</taxon>
        <taxon>Metazoa</taxon>
        <taxon>Chordata</taxon>
        <taxon>Craniata</taxon>
        <taxon>Vertebrata</taxon>
        <taxon>Euteleostomi</taxon>
        <taxon>Mammalia</taxon>
        <taxon>Eutheria</taxon>
        <taxon>Euarchontoglires</taxon>
        <taxon>Glires</taxon>
        <taxon>Rodentia</taxon>
        <taxon>Myomorpha</taxon>
        <taxon>Muroidea</taxon>
        <taxon>Muridae</taxon>
        <taxon>Murinae</taxon>
        <taxon>Mus</taxon>
        <taxon>Mus</taxon>
    </lineage>
</organism>
<sequence>MAVSERRLLAAMLAVAAAAALRVAAESEPGWDVAAPDLLYAEGTAAYSRGDWPGVVLNMERALRSRAALRALRLRCRTRCATELPWAPDLDLGPDPSLSQDPGAAALHDLRFFGAVLRRAACLRRCLGPPSAHLLSEELDLEFNKRSPYNYLQVAYFKINKLEKAVAAAHTFFVGNPEHMEMRQNLDYYQTMSGVKEADFRDLEAKPHMHEFRLGVRLYSEEKPQEAVPHLEAALQEYFVADEECRALCEGPYDYDGYNYLDYSADLFQAITDHYVQVLNCKQNCVTELASHPSREKPFEDFLPSHYNYLQFAYYNIGNYTQAIECAKTYLLFFPNDEVMHQNLAYYTAMLGEEEASSISPRENAEEYRRRSLLEKELLFFAYDIFGIPFVDPDSWTPEEVIPKRLQEKQKSERETAVRISQEIGNLMKEIETLVEEKTKESLDVSRLTREGGPLLYEGISLTMNSKVLNGSQRVVMDGVISDDECQELQRLTNAAATSGDGYRGQTSPHTPNEKFYGVTVLKALKLGQEGKVPLQSARMYYNVTEKVRRVMESYFRLDTPLYFSYSHLVCRTAIEESQAERKDSSHPVHVDNCILNAEALMCIKEPPAYTFRDYSAILYLNGDFDGGNFYFTELDAKTVTAEVQPQCGRAVGFSSGTENPHGVKAVTRGQRCAIALWFTLDPRHSERDRVQADDLVKMLFSPEEVDLPQEQPLPDQQGSPEPGEESLSDRGSLHKDEL</sequence>
<dbReference type="EC" id="1.14.11.7"/>
<dbReference type="EMBL" id="AF165163">
    <property type="protein sequence ID" value="AAF04806.1"/>
    <property type="status" value="ALT_SEQ"/>
    <property type="molecule type" value="mRNA"/>
</dbReference>
<dbReference type="EMBL" id="AF165164">
    <property type="protein sequence ID" value="AAF04807.1"/>
    <property type="status" value="ALT_SEQ"/>
    <property type="molecule type" value="mRNA"/>
</dbReference>
<dbReference type="EMBL" id="AK010578">
    <property type="protein sequence ID" value="BAB27041.1"/>
    <property type="status" value="ALT_FRAME"/>
    <property type="molecule type" value="mRNA"/>
</dbReference>
<dbReference type="EMBL" id="AK030436">
    <property type="protein sequence ID" value="BAC26962.1"/>
    <property type="molecule type" value="mRNA"/>
</dbReference>
<dbReference type="EMBL" id="AK132262">
    <property type="protein sequence ID" value="BAE21065.1"/>
    <property type="status" value="ALT_SEQ"/>
    <property type="molecule type" value="mRNA"/>
</dbReference>
<dbReference type="EMBL" id="AK159505">
    <property type="protein sequence ID" value="BAE35138.1"/>
    <property type="molecule type" value="mRNA"/>
</dbReference>
<dbReference type="EMBL" id="AL606975">
    <property type="status" value="NOT_ANNOTATED_CDS"/>
    <property type="molecule type" value="Genomic_DNA"/>
</dbReference>
<dbReference type="EMBL" id="BC024047">
    <property type="protein sequence ID" value="AAH24047.1"/>
    <property type="molecule type" value="mRNA"/>
</dbReference>
<dbReference type="CCDS" id="CCDS38859.1">
    <molecule id="Q3V1T4-1"/>
</dbReference>
<dbReference type="CCDS" id="CCDS38860.1">
    <molecule id="Q3V1T4-3"/>
</dbReference>
<dbReference type="RefSeq" id="NP_001035874.1">
    <molecule id="Q3V1T4-3"/>
    <property type="nucleotide sequence ID" value="NM_001042411.1"/>
</dbReference>
<dbReference type="RefSeq" id="NP_001273077.1">
    <property type="nucleotide sequence ID" value="NM_001286148.1"/>
</dbReference>
<dbReference type="RefSeq" id="NP_062756.2">
    <property type="nucleotide sequence ID" value="NM_019782.3"/>
</dbReference>
<dbReference type="RefSeq" id="NP_062757.2">
    <molecule id="Q3V1T4-1"/>
    <property type="nucleotide sequence ID" value="NM_019783.2"/>
</dbReference>
<dbReference type="SMR" id="Q3V1T4"/>
<dbReference type="BioGRID" id="207954">
    <property type="interactions" value="4"/>
</dbReference>
<dbReference type="CORUM" id="Q3V1T4"/>
<dbReference type="FunCoup" id="Q3V1T4">
    <property type="interactions" value="1281"/>
</dbReference>
<dbReference type="STRING" id="10090.ENSMUSP00000099723"/>
<dbReference type="GlyCosmos" id="Q3V1T4">
    <property type="glycosylation" value="3 sites, No reported glycans"/>
</dbReference>
<dbReference type="GlyGen" id="Q3V1T4">
    <property type="glycosylation" value="4 sites, 2 N-linked glycans (2 sites)"/>
</dbReference>
<dbReference type="iPTMnet" id="Q3V1T4"/>
<dbReference type="PhosphoSitePlus" id="Q3V1T4"/>
<dbReference type="PaxDb" id="10090-ENSMUSP00000099723"/>
<dbReference type="PeptideAtlas" id="Q3V1T4"/>
<dbReference type="ProteomicsDB" id="294293">
    <molecule id="Q3V1T4-1"/>
</dbReference>
<dbReference type="ProteomicsDB" id="294294">
    <molecule id="Q3V1T4-2"/>
</dbReference>
<dbReference type="ProteomicsDB" id="294295">
    <molecule id="Q3V1T4-3"/>
</dbReference>
<dbReference type="Pumba" id="Q3V1T4"/>
<dbReference type="Antibodypedia" id="32239">
    <property type="antibodies" value="311 antibodies from 23 providers"/>
</dbReference>
<dbReference type="DNASU" id="56401"/>
<dbReference type="Ensembl" id="ENSMUST00000081606.7">
    <molecule id="Q3V1T4-3"/>
    <property type="protein sequence ID" value="ENSMUSP00000080312.7"/>
    <property type="gene ID" value="ENSMUSG00000028641.17"/>
</dbReference>
<dbReference type="Ensembl" id="ENSMUST00000121111.9">
    <molecule id="Q3V1T4-1"/>
    <property type="protein sequence ID" value="ENSMUSP00000112504.3"/>
    <property type="gene ID" value="ENSMUSG00000028641.17"/>
</dbReference>
<dbReference type="GeneID" id="56401"/>
<dbReference type="KEGG" id="mmu:56401"/>
<dbReference type="UCSC" id="uc008ulq.1">
    <molecule id="Q3V1T4-1"/>
    <property type="organism name" value="mouse"/>
</dbReference>
<dbReference type="AGR" id="MGI:1888921"/>
<dbReference type="CTD" id="64175"/>
<dbReference type="MGI" id="MGI:1888921">
    <property type="gene designation" value="P3h1"/>
</dbReference>
<dbReference type="VEuPathDB" id="HostDB:ENSMUSG00000028641"/>
<dbReference type="eggNOG" id="KOG4459">
    <property type="taxonomic scope" value="Eukaryota"/>
</dbReference>
<dbReference type="GeneTree" id="ENSGT00940000158725"/>
<dbReference type="HOGENOM" id="CLU_017820_1_0_1"/>
<dbReference type="InParanoid" id="Q3V1T4"/>
<dbReference type="OrthoDB" id="8517835at2759"/>
<dbReference type="BRENDA" id="1.14.11.7">
    <property type="organism ID" value="3474"/>
</dbReference>
<dbReference type="BioGRID-ORCS" id="56401">
    <property type="hits" value="1 hit in 80 CRISPR screens"/>
</dbReference>
<dbReference type="ChiTaRS" id="P3h1">
    <property type="organism name" value="mouse"/>
</dbReference>
<dbReference type="PRO" id="PR:Q3V1T4"/>
<dbReference type="Proteomes" id="UP000000589">
    <property type="component" value="Chromosome 4"/>
</dbReference>
<dbReference type="RNAct" id="Q3V1T4">
    <property type="molecule type" value="protein"/>
</dbReference>
<dbReference type="Bgee" id="ENSMUSG00000028641">
    <property type="expression patterns" value="Expressed in humerus cartilage element and 230 other cell types or tissues"/>
</dbReference>
<dbReference type="ExpressionAtlas" id="Q3V1T4">
    <property type="expression patterns" value="baseline and differential"/>
</dbReference>
<dbReference type="GO" id="GO:0005604">
    <property type="term" value="C:basement membrane"/>
    <property type="evidence" value="ECO:0000266"/>
    <property type="project" value="MGI"/>
</dbReference>
<dbReference type="GO" id="GO:0005737">
    <property type="term" value="C:cytoplasm"/>
    <property type="evidence" value="ECO:0000266"/>
    <property type="project" value="MGI"/>
</dbReference>
<dbReference type="GO" id="GO:0005783">
    <property type="term" value="C:endoplasmic reticulum"/>
    <property type="evidence" value="ECO:0000266"/>
    <property type="project" value="MGI"/>
</dbReference>
<dbReference type="GO" id="GO:0005576">
    <property type="term" value="C:extracellular region"/>
    <property type="evidence" value="ECO:0007669"/>
    <property type="project" value="UniProtKB-KW"/>
</dbReference>
<dbReference type="GO" id="GO:0005634">
    <property type="term" value="C:nucleus"/>
    <property type="evidence" value="ECO:0000266"/>
    <property type="project" value="MGI"/>
</dbReference>
<dbReference type="GO" id="GO:0005886">
    <property type="term" value="C:plasma membrane"/>
    <property type="evidence" value="ECO:0000304"/>
    <property type="project" value="MGI"/>
</dbReference>
<dbReference type="GO" id="GO:0005506">
    <property type="term" value="F:iron ion binding"/>
    <property type="evidence" value="ECO:0007669"/>
    <property type="project" value="InterPro"/>
</dbReference>
<dbReference type="GO" id="GO:0031418">
    <property type="term" value="F:L-ascorbic acid binding"/>
    <property type="evidence" value="ECO:0007669"/>
    <property type="project" value="UniProtKB-KW"/>
</dbReference>
<dbReference type="GO" id="GO:0019797">
    <property type="term" value="F:procollagen-proline 3-dioxygenase activity"/>
    <property type="evidence" value="ECO:0000266"/>
    <property type="project" value="MGI"/>
</dbReference>
<dbReference type="GO" id="GO:0060348">
    <property type="term" value="P:bone development"/>
    <property type="evidence" value="ECO:0007669"/>
    <property type="project" value="Ensembl"/>
</dbReference>
<dbReference type="GO" id="GO:0030199">
    <property type="term" value="P:collagen fibril organization"/>
    <property type="evidence" value="ECO:0000315"/>
    <property type="project" value="MGI"/>
</dbReference>
<dbReference type="GO" id="GO:0032963">
    <property type="term" value="P:collagen metabolic process"/>
    <property type="evidence" value="ECO:0000266"/>
    <property type="project" value="MGI"/>
</dbReference>
<dbReference type="GO" id="GO:0030308">
    <property type="term" value="P:negative regulation of cell growth"/>
    <property type="evidence" value="ECO:0000314"/>
    <property type="project" value="MGI"/>
</dbReference>
<dbReference type="GO" id="GO:1901874">
    <property type="term" value="P:negative regulation of post-translational protein modification"/>
    <property type="evidence" value="ECO:0007669"/>
    <property type="project" value="Ensembl"/>
</dbReference>
<dbReference type="GO" id="GO:0006457">
    <property type="term" value="P:protein folding"/>
    <property type="evidence" value="ECO:0007669"/>
    <property type="project" value="Ensembl"/>
</dbReference>
<dbReference type="GO" id="GO:0050821">
    <property type="term" value="P:protein stabilization"/>
    <property type="evidence" value="ECO:0007669"/>
    <property type="project" value="Ensembl"/>
</dbReference>
<dbReference type="GO" id="GO:0030278">
    <property type="term" value="P:regulation of ossification"/>
    <property type="evidence" value="ECO:0000315"/>
    <property type="project" value="MGI"/>
</dbReference>
<dbReference type="GO" id="GO:0050708">
    <property type="term" value="P:regulation of protein secretion"/>
    <property type="evidence" value="ECO:0007669"/>
    <property type="project" value="Ensembl"/>
</dbReference>
<dbReference type="FunFam" id="2.60.120.620:FF:000003">
    <property type="entry name" value="Prolyl 3-hydroxylase 2"/>
    <property type="match status" value="1"/>
</dbReference>
<dbReference type="Gene3D" id="2.60.120.620">
    <property type="entry name" value="q2cbj1_9rhob like domain"/>
    <property type="match status" value="1"/>
</dbReference>
<dbReference type="Gene3D" id="1.25.40.10">
    <property type="entry name" value="Tetratricopeptide repeat domain"/>
    <property type="match status" value="2"/>
</dbReference>
<dbReference type="InterPro" id="IPR056585">
    <property type="entry name" value="Leprecan_dom"/>
</dbReference>
<dbReference type="InterPro" id="IPR005123">
    <property type="entry name" value="Oxoglu/Fe-dep_dioxygenase_dom"/>
</dbReference>
<dbReference type="InterPro" id="IPR039575">
    <property type="entry name" value="P3H"/>
</dbReference>
<dbReference type="InterPro" id="IPR006620">
    <property type="entry name" value="Pro_4_hyd_alph"/>
</dbReference>
<dbReference type="InterPro" id="IPR044862">
    <property type="entry name" value="Pro_4_hyd_alph_FE2OG_OXY"/>
</dbReference>
<dbReference type="InterPro" id="IPR011990">
    <property type="entry name" value="TPR-like_helical_dom_sf"/>
</dbReference>
<dbReference type="PANTHER" id="PTHR14049">
    <property type="entry name" value="LEPRECAN 1"/>
    <property type="match status" value="1"/>
</dbReference>
<dbReference type="PANTHER" id="PTHR14049:SF5">
    <property type="entry name" value="PROLYL 3-HYDROXYLASE 1"/>
    <property type="match status" value="1"/>
</dbReference>
<dbReference type="Pfam" id="PF13640">
    <property type="entry name" value="2OG-FeII_Oxy_3"/>
    <property type="match status" value="1"/>
</dbReference>
<dbReference type="Pfam" id="PF23557">
    <property type="entry name" value="TPR_leprecan"/>
    <property type="match status" value="1"/>
</dbReference>
<dbReference type="SMART" id="SM00702">
    <property type="entry name" value="P4Hc"/>
    <property type="match status" value="1"/>
</dbReference>
<dbReference type="SUPFAM" id="SSF48452">
    <property type="entry name" value="TPR-like"/>
    <property type="match status" value="1"/>
</dbReference>
<dbReference type="PROSITE" id="PS00014">
    <property type="entry name" value="ER_TARGET"/>
    <property type="match status" value="1"/>
</dbReference>
<dbReference type="PROSITE" id="PS51471">
    <property type="entry name" value="FE2OG_OXY"/>
    <property type="match status" value="1"/>
</dbReference>
<name>P3H1_MOUSE</name>
<accession>Q3V1T4</accession>
<accession>A2A7Q4</accession>
<accession>A6PW85</accession>
<accession>Q3TWX8</accession>
<accession>Q8BSV2</accession>
<accession>Q8CFL3</accession>
<accession>Q9CWK5</accession>
<accession>Q9QZT6</accession>
<accession>Q9QZT7</accession>
<keyword id="KW-0025">Alternative splicing</keyword>
<keyword id="KW-0175">Coiled coil</keyword>
<keyword id="KW-0223">Dioxygenase</keyword>
<keyword id="KW-0256">Endoplasmic reticulum</keyword>
<keyword id="KW-0272">Extracellular matrix</keyword>
<keyword id="KW-0325">Glycoprotein</keyword>
<keyword id="KW-0408">Iron</keyword>
<keyword id="KW-0479">Metal-binding</keyword>
<keyword id="KW-0560">Oxidoreductase</keyword>
<keyword id="KW-0654">Proteoglycan</keyword>
<keyword id="KW-1185">Reference proteome</keyword>
<keyword id="KW-0677">Repeat</keyword>
<keyword id="KW-0964">Secreted</keyword>
<keyword id="KW-0732">Signal</keyword>
<keyword id="KW-0802">TPR repeat</keyword>
<keyword id="KW-0847">Vitamin C</keyword>
<feature type="signal peptide" evidence="3">
    <location>
        <begin position="1"/>
        <end position="25"/>
    </location>
</feature>
<feature type="chain" id="PRO_0000240353" description="Prolyl 3-hydroxylase 1">
    <location>
        <begin position="26"/>
        <end position="739"/>
    </location>
</feature>
<feature type="repeat" description="TPR 1">
    <location>
        <begin position="36"/>
        <end position="69"/>
    </location>
</feature>
<feature type="repeat" description="TPR 2">
    <location>
        <begin position="146"/>
        <end position="179"/>
    </location>
</feature>
<feature type="repeat" description="TPR 3">
    <location>
        <begin position="208"/>
        <end position="241"/>
    </location>
</feature>
<feature type="repeat" description="TPR 4">
    <location>
        <begin position="304"/>
        <end position="337"/>
    </location>
</feature>
<feature type="domain" description="Fe2OG dioxygenase" evidence="4">
    <location>
        <begin position="567"/>
        <end position="681"/>
    </location>
</feature>
<feature type="region of interest" description="Disordered" evidence="6">
    <location>
        <begin position="702"/>
        <end position="739"/>
    </location>
</feature>
<feature type="coiled-coil region" evidence="3">
    <location>
        <begin position="404"/>
        <end position="442"/>
    </location>
</feature>
<feature type="short sequence motif" description="Prevents secretion from ER" evidence="5">
    <location>
        <begin position="736"/>
        <end position="739"/>
    </location>
</feature>
<feature type="compositionally biased region" description="Low complexity" evidence="6">
    <location>
        <begin position="709"/>
        <end position="718"/>
    </location>
</feature>
<feature type="compositionally biased region" description="Basic and acidic residues" evidence="6">
    <location>
        <begin position="728"/>
        <end position="739"/>
    </location>
</feature>
<feature type="active site" evidence="1">
    <location>
        <position position="672"/>
    </location>
</feature>
<feature type="binding site">
    <location>
        <position position="590"/>
    </location>
    <ligand>
        <name>Fe cation</name>
        <dbReference type="ChEBI" id="CHEBI:24875"/>
    </ligand>
</feature>
<feature type="binding site">
    <location>
        <position position="592"/>
    </location>
    <ligand>
        <name>Fe cation</name>
        <dbReference type="ChEBI" id="CHEBI:24875"/>
    </ligand>
</feature>
<feature type="binding site">
    <location>
        <position position="662"/>
    </location>
    <ligand>
        <name>Fe cation</name>
        <dbReference type="ChEBI" id="CHEBI:24875"/>
    </ligand>
</feature>
<feature type="glycosylation site" description="N-linked (GlcNAc...) asparagine" evidence="3">
    <location>
        <position position="319"/>
    </location>
</feature>
<feature type="glycosylation site" description="N-linked (GlcNAc...) asparagine" evidence="3">
    <location>
        <position position="470"/>
    </location>
</feature>
<feature type="glycosylation site" description="N-linked (GlcNAc...) asparagine" evidence="3">
    <location>
        <position position="543"/>
    </location>
</feature>
<feature type="splice variant" id="VSP_019349" description="In isoform 3." evidence="8">
    <location>
        <begin position="1"/>
        <end position="179"/>
    </location>
</feature>
<feature type="splice variant" id="VSP_019350" description="In isoform 2." evidence="7">
    <original>MYYN</original>
    <variation>TALQ</variation>
    <location>
        <begin position="540"/>
        <end position="543"/>
    </location>
</feature>
<feature type="splice variant" id="VSP_019351" description="In isoform 2." evidence="7">
    <location>
        <begin position="544"/>
        <end position="739"/>
    </location>
</feature>
<feature type="sequence conflict" description="In Ref. 1; AAF04806/AAF04807." evidence="9" ref="1">
    <original>SERRLLAAMLAVAAAAALRVAA</original>
    <variation>TKGGCWHDASGRRRRRLTGCG</variation>
    <location>
        <begin position="4"/>
        <end position="25"/>
    </location>
</feature>
<feature type="sequence conflict" description="In Ref. 1; AAF04806/AAF04807." evidence="9" ref="1">
    <original>G</original>
    <variation>R</variation>
    <location>
        <position position="50"/>
    </location>
</feature>
<feature type="sequence conflict" description="In Ref. 1; AAF04806/AAF04807." evidence="9" ref="1">
    <original>RS</original>
    <variation>PN</variation>
    <location>
        <begin position="371"/>
        <end position="372"/>
    </location>
</feature>
<feature type="sequence conflict" description="In Ref. 2; BAE21065." evidence="9" ref="2">
    <original>P</original>
    <variation>T</variation>
    <location>
        <position position="403"/>
    </location>
</feature>
<feature type="sequence conflict" description="In Ref. 2; BAC26962." evidence="9" ref="2">
    <location>
        <position position="420"/>
    </location>
</feature>
<feature type="sequence conflict" description="In Ref. 2; BAE35138." evidence="9" ref="2">
    <original>D</original>
    <variation>N</variation>
    <location>
        <position position="484"/>
    </location>
</feature>
<feature type="sequence conflict" description="In Ref. 1; AAF04806." evidence="9" ref="1">
    <original>L</original>
    <variation>F</variation>
    <location>
        <position position="569"/>
    </location>
</feature>
<feature type="sequence conflict" description="In Ref. 2; BAE21065." evidence="9" ref="2">
    <original>V</original>
    <variation>D</variation>
    <location>
        <position position="589"/>
    </location>
</feature>
<feature type="sequence conflict" description="In Ref. 1; AAF04806." evidence="9" ref="1">
    <original>L</original>
    <variation>F</variation>
    <location>
        <position position="601"/>
    </location>
</feature>
<feature type="sequence conflict" description="In Ref. 1; AAF04806." evidence="9" ref="1">
    <original>D</original>
    <variation>E</variation>
    <location>
        <position position="614"/>
    </location>
</feature>
<feature type="sequence conflict" description="In Ref. 2; BAC26962." evidence="9" ref="2">
    <original>H</original>
    <variation>Q</variation>
    <location>
        <position position="685"/>
    </location>
</feature>
<feature type="sequence conflict" description="In Ref. 2; BAE35138 and 3; AAH24047." evidence="9" ref="2 3">
    <original>D</original>
    <variation>G</variation>
    <location>
        <position position="716"/>
    </location>
</feature>
<feature type="sequence conflict" description="In Ref. 1; AAF04806." evidence="9" ref="1">
    <original>SLSDRGSLHKDEL</original>
    <variation>FLHGATVLGVGIA</variation>
    <location>
        <begin position="727"/>
        <end position="739"/>
    </location>
</feature>
<evidence type="ECO:0000250" key="1"/>
<evidence type="ECO:0000250" key="2">
    <source>
        <dbReference type="UniProtKB" id="Q9R1J8"/>
    </source>
</evidence>
<evidence type="ECO:0000255" key="3"/>
<evidence type="ECO:0000255" key="4">
    <source>
        <dbReference type="PROSITE-ProRule" id="PRU00805"/>
    </source>
</evidence>
<evidence type="ECO:0000255" key="5">
    <source>
        <dbReference type="PROSITE-ProRule" id="PRU10138"/>
    </source>
</evidence>
<evidence type="ECO:0000256" key="6">
    <source>
        <dbReference type="SAM" id="MobiDB-lite"/>
    </source>
</evidence>
<evidence type="ECO:0000303" key="7">
    <source>
    </source>
</evidence>
<evidence type="ECO:0000303" key="8">
    <source>
    </source>
</evidence>
<evidence type="ECO:0000305" key="9"/>
<evidence type="ECO:0000312" key="10">
    <source>
        <dbReference type="MGI" id="MGI:1888921"/>
    </source>
</evidence>
<protein>
    <recommendedName>
        <fullName evidence="10">Prolyl 3-hydroxylase 1</fullName>
        <ecNumber>1.14.11.7</ecNumber>
    </recommendedName>
    <alternativeName>
        <fullName evidence="7">Growth suppressor 1</fullName>
    </alternativeName>
    <alternativeName>
        <fullName evidence="2">Leucine- and proline-enriched proteoglycan 1</fullName>
        <shortName evidence="2">Leprecan-1</shortName>
    </alternativeName>
</protein>
<reference key="1">
    <citation type="journal article" date="2000" name="Oncogene">
        <title>Gros1, a potential growth suppressor on chromosome 1: its identity to basement membrane-associated proteoglycan, leprecan.</title>
        <authorList>
            <person name="Kaul S.C."/>
            <person name="Sugihara T."/>
            <person name="Yoshida A."/>
            <person name="Nomura H."/>
            <person name="Wadhwa R."/>
        </authorList>
    </citation>
    <scope>NUCLEOTIDE SEQUENCE [MRNA] (ISOFORMS 1 AND 2)</scope>
    <source>
        <strain>CD-1/ICR</strain>
        <tissue>Fibroblast</tissue>
        <tissue>Testis</tissue>
    </source>
</reference>
<reference key="2">
    <citation type="journal article" date="2005" name="Science">
        <title>The transcriptional landscape of the mammalian genome.</title>
        <authorList>
            <person name="Carninci P."/>
            <person name="Kasukawa T."/>
            <person name="Katayama S."/>
            <person name="Gough J."/>
            <person name="Frith M.C."/>
            <person name="Maeda N."/>
            <person name="Oyama R."/>
            <person name="Ravasi T."/>
            <person name="Lenhard B."/>
            <person name="Wells C."/>
            <person name="Kodzius R."/>
            <person name="Shimokawa K."/>
            <person name="Bajic V.B."/>
            <person name="Brenner S.E."/>
            <person name="Batalov S."/>
            <person name="Forrest A.R."/>
            <person name="Zavolan M."/>
            <person name="Davis M.J."/>
            <person name="Wilming L.G."/>
            <person name="Aidinis V."/>
            <person name="Allen J.E."/>
            <person name="Ambesi-Impiombato A."/>
            <person name="Apweiler R."/>
            <person name="Aturaliya R.N."/>
            <person name="Bailey T.L."/>
            <person name="Bansal M."/>
            <person name="Baxter L."/>
            <person name="Beisel K.W."/>
            <person name="Bersano T."/>
            <person name="Bono H."/>
            <person name="Chalk A.M."/>
            <person name="Chiu K.P."/>
            <person name="Choudhary V."/>
            <person name="Christoffels A."/>
            <person name="Clutterbuck D.R."/>
            <person name="Crowe M.L."/>
            <person name="Dalla E."/>
            <person name="Dalrymple B.P."/>
            <person name="de Bono B."/>
            <person name="Della Gatta G."/>
            <person name="di Bernardo D."/>
            <person name="Down T."/>
            <person name="Engstrom P."/>
            <person name="Fagiolini M."/>
            <person name="Faulkner G."/>
            <person name="Fletcher C.F."/>
            <person name="Fukushima T."/>
            <person name="Furuno M."/>
            <person name="Futaki S."/>
            <person name="Gariboldi M."/>
            <person name="Georgii-Hemming P."/>
            <person name="Gingeras T.R."/>
            <person name="Gojobori T."/>
            <person name="Green R.E."/>
            <person name="Gustincich S."/>
            <person name="Harbers M."/>
            <person name="Hayashi Y."/>
            <person name="Hensch T.K."/>
            <person name="Hirokawa N."/>
            <person name="Hill D."/>
            <person name="Huminiecki L."/>
            <person name="Iacono M."/>
            <person name="Ikeo K."/>
            <person name="Iwama A."/>
            <person name="Ishikawa T."/>
            <person name="Jakt M."/>
            <person name="Kanapin A."/>
            <person name="Katoh M."/>
            <person name="Kawasawa Y."/>
            <person name="Kelso J."/>
            <person name="Kitamura H."/>
            <person name="Kitano H."/>
            <person name="Kollias G."/>
            <person name="Krishnan S.P."/>
            <person name="Kruger A."/>
            <person name="Kummerfeld S.K."/>
            <person name="Kurochkin I.V."/>
            <person name="Lareau L.F."/>
            <person name="Lazarevic D."/>
            <person name="Lipovich L."/>
            <person name="Liu J."/>
            <person name="Liuni S."/>
            <person name="McWilliam S."/>
            <person name="Madan Babu M."/>
            <person name="Madera M."/>
            <person name="Marchionni L."/>
            <person name="Matsuda H."/>
            <person name="Matsuzawa S."/>
            <person name="Miki H."/>
            <person name="Mignone F."/>
            <person name="Miyake S."/>
            <person name="Morris K."/>
            <person name="Mottagui-Tabar S."/>
            <person name="Mulder N."/>
            <person name="Nakano N."/>
            <person name="Nakauchi H."/>
            <person name="Ng P."/>
            <person name="Nilsson R."/>
            <person name="Nishiguchi S."/>
            <person name="Nishikawa S."/>
            <person name="Nori F."/>
            <person name="Ohara O."/>
            <person name="Okazaki Y."/>
            <person name="Orlando V."/>
            <person name="Pang K.C."/>
            <person name="Pavan W.J."/>
            <person name="Pavesi G."/>
            <person name="Pesole G."/>
            <person name="Petrovsky N."/>
            <person name="Piazza S."/>
            <person name="Reed J."/>
            <person name="Reid J.F."/>
            <person name="Ring B.Z."/>
            <person name="Ringwald M."/>
            <person name="Rost B."/>
            <person name="Ruan Y."/>
            <person name="Salzberg S.L."/>
            <person name="Sandelin A."/>
            <person name="Schneider C."/>
            <person name="Schoenbach C."/>
            <person name="Sekiguchi K."/>
            <person name="Semple C.A."/>
            <person name="Seno S."/>
            <person name="Sessa L."/>
            <person name="Sheng Y."/>
            <person name="Shibata Y."/>
            <person name="Shimada H."/>
            <person name="Shimada K."/>
            <person name="Silva D."/>
            <person name="Sinclair B."/>
            <person name="Sperling S."/>
            <person name="Stupka E."/>
            <person name="Sugiura K."/>
            <person name="Sultana R."/>
            <person name="Takenaka Y."/>
            <person name="Taki K."/>
            <person name="Tammoja K."/>
            <person name="Tan S.L."/>
            <person name="Tang S."/>
            <person name="Taylor M.S."/>
            <person name="Tegner J."/>
            <person name="Teichmann S.A."/>
            <person name="Ueda H.R."/>
            <person name="van Nimwegen E."/>
            <person name="Verardo R."/>
            <person name="Wei C.L."/>
            <person name="Yagi K."/>
            <person name="Yamanishi H."/>
            <person name="Zabarovsky E."/>
            <person name="Zhu S."/>
            <person name="Zimmer A."/>
            <person name="Hide W."/>
            <person name="Bult C."/>
            <person name="Grimmond S.M."/>
            <person name="Teasdale R.D."/>
            <person name="Liu E.T."/>
            <person name="Brusic V."/>
            <person name="Quackenbush J."/>
            <person name="Wahlestedt C."/>
            <person name="Mattick J.S."/>
            <person name="Hume D.A."/>
            <person name="Kai C."/>
            <person name="Sasaki D."/>
            <person name="Tomaru Y."/>
            <person name="Fukuda S."/>
            <person name="Kanamori-Katayama M."/>
            <person name="Suzuki M."/>
            <person name="Aoki J."/>
            <person name="Arakawa T."/>
            <person name="Iida J."/>
            <person name="Imamura K."/>
            <person name="Itoh M."/>
            <person name="Kato T."/>
            <person name="Kawaji H."/>
            <person name="Kawagashira N."/>
            <person name="Kawashima T."/>
            <person name="Kojima M."/>
            <person name="Kondo S."/>
            <person name="Konno H."/>
            <person name="Nakano K."/>
            <person name="Ninomiya N."/>
            <person name="Nishio T."/>
            <person name="Okada M."/>
            <person name="Plessy C."/>
            <person name="Shibata K."/>
            <person name="Shiraki T."/>
            <person name="Suzuki S."/>
            <person name="Tagami M."/>
            <person name="Waki K."/>
            <person name="Watahiki A."/>
            <person name="Okamura-Oho Y."/>
            <person name="Suzuki H."/>
            <person name="Kawai J."/>
            <person name="Hayashizaki Y."/>
        </authorList>
    </citation>
    <scope>NUCLEOTIDE SEQUENCE [LARGE SCALE MRNA] (ISOFORMS 1 AND 3)</scope>
    <source>
        <strain>C57BL/6J</strain>
        <tissue>Embryonic stem cell</tissue>
        <tissue>Pituitary</tissue>
        <tissue>Placenta</tissue>
    </source>
</reference>
<reference key="3">
    <citation type="journal article" date="2009" name="PLoS Biol.">
        <title>Lineage-specific biology revealed by a finished genome assembly of the mouse.</title>
        <authorList>
            <person name="Church D.M."/>
            <person name="Goodstadt L."/>
            <person name="Hillier L.W."/>
            <person name="Zody M.C."/>
            <person name="Goldstein S."/>
            <person name="She X."/>
            <person name="Bult C.J."/>
            <person name="Agarwala R."/>
            <person name="Cherry J.L."/>
            <person name="DiCuccio M."/>
            <person name="Hlavina W."/>
            <person name="Kapustin Y."/>
            <person name="Meric P."/>
            <person name="Maglott D."/>
            <person name="Birtle Z."/>
            <person name="Marques A.C."/>
            <person name="Graves T."/>
            <person name="Zhou S."/>
            <person name="Teague B."/>
            <person name="Potamousis K."/>
            <person name="Churas C."/>
            <person name="Place M."/>
            <person name="Herschleb J."/>
            <person name="Runnheim R."/>
            <person name="Forrest D."/>
            <person name="Amos-Landgraf J."/>
            <person name="Schwartz D.C."/>
            <person name="Cheng Z."/>
            <person name="Lindblad-Toh K."/>
            <person name="Eichler E.E."/>
            <person name="Ponting C.P."/>
        </authorList>
    </citation>
    <scope>NUCLEOTIDE SEQUENCE [LARGE SCALE GENOMIC DNA]</scope>
    <source>
        <strain>C57BL/6J</strain>
    </source>
</reference>
<reference key="4">
    <citation type="journal article" date="2004" name="Genome Res.">
        <title>The status, quality, and expansion of the NIH full-length cDNA project: the Mammalian Gene Collection (MGC).</title>
        <authorList>
            <consortium name="The MGC Project Team"/>
        </authorList>
    </citation>
    <scope>NUCLEOTIDE SEQUENCE [LARGE SCALE MRNA] (ISOFORM 1)</scope>
    <source>
        <strain>FVB/N</strain>
        <tissue>Mammary tumor</tissue>
    </source>
</reference>
<reference key="5">
    <citation type="journal article" date="2010" name="Cell">
        <title>A tissue-specific atlas of mouse protein phosphorylation and expression.</title>
        <authorList>
            <person name="Huttlin E.L."/>
            <person name="Jedrychowski M.P."/>
            <person name="Elias J.E."/>
            <person name="Goswami T."/>
            <person name="Rad R."/>
            <person name="Beausoleil S.A."/>
            <person name="Villen J."/>
            <person name="Haas W."/>
            <person name="Sowa M.E."/>
            <person name="Gygi S.P."/>
        </authorList>
    </citation>
    <scope>IDENTIFICATION BY MASS SPECTROMETRY [LARGE SCALE ANALYSIS]</scope>
    <source>
        <tissue>Brown adipose tissue</tissue>
        <tissue>Heart</tissue>
        <tissue>Kidney</tissue>
        <tissue>Lung</tissue>
        <tissue>Testis</tissue>
    </source>
</reference>
<proteinExistence type="evidence at protein level"/>